<accession>Q7MLV4</accession>
<feature type="signal peptide" evidence="1">
    <location>
        <begin position="1"/>
        <end position="16"/>
    </location>
</feature>
<feature type="chain" id="PRO_0000018282" description="Outer-membrane lipoprotein carrier protein">
    <location>
        <begin position="17"/>
        <end position="198"/>
    </location>
</feature>
<reference key="1">
    <citation type="journal article" date="2003" name="Genome Res.">
        <title>Comparative genome analysis of Vibrio vulnificus, a marine pathogen.</title>
        <authorList>
            <person name="Chen C.-Y."/>
            <person name="Wu K.-M."/>
            <person name="Chang Y.-C."/>
            <person name="Chang C.-H."/>
            <person name="Tsai H.-C."/>
            <person name="Liao T.-L."/>
            <person name="Liu Y.-M."/>
            <person name="Chen H.-J."/>
            <person name="Shen A.B.-T."/>
            <person name="Li J.-C."/>
            <person name="Su T.-L."/>
            <person name="Shao C.-P."/>
            <person name="Lee C.-T."/>
            <person name="Hor L.-I."/>
            <person name="Tsai S.-F."/>
        </authorList>
    </citation>
    <scope>NUCLEOTIDE SEQUENCE [LARGE SCALE GENOMIC DNA]</scope>
    <source>
        <strain>YJ016</strain>
    </source>
</reference>
<organism>
    <name type="scientific">Vibrio vulnificus (strain YJ016)</name>
    <dbReference type="NCBI Taxonomy" id="196600"/>
    <lineage>
        <taxon>Bacteria</taxon>
        <taxon>Pseudomonadati</taxon>
        <taxon>Pseudomonadota</taxon>
        <taxon>Gammaproteobacteria</taxon>
        <taxon>Vibrionales</taxon>
        <taxon>Vibrionaceae</taxon>
        <taxon>Vibrio</taxon>
    </lineage>
</organism>
<dbReference type="EMBL" id="BA000037">
    <property type="protein sequence ID" value="BAC94087.1"/>
    <property type="molecule type" value="Genomic_DNA"/>
</dbReference>
<dbReference type="RefSeq" id="WP_011080765.1">
    <property type="nucleotide sequence ID" value="NC_005139.1"/>
</dbReference>
<dbReference type="SMR" id="Q7MLV4"/>
<dbReference type="STRING" id="672.VV93_v1c12370"/>
<dbReference type="KEGG" id="vvy:VV1323"/>
<dbReference type="eggNOG" id="COG2834">
    <property type="taxonomic scope" value="Bacteria"/>
</dbReference>
<dbReference type="HOGENOM" id="CLU_087560_1_1_6"/>
<dbReference type="Proteomes" id="UP000002675">
    <property type="component" value="Chromosome I"/>
</dbReference>
<dbReference type="GO" id="GO:0030288">
    <property type="term" value="C:outer membrane-bounded periplasmic space"/>
    <property type="evidence" value="ECO:0007669"/>
    <property type="project" value="TreeGrafter"/>
</dbReference>
<dbReference type="GO" id="GO:0044874">
    <property type="term" value="P:lipoprotein localization to outer membrane"/>
    <property type="evidence" value="ECO:0007669"/>
    <property type="project" value="UniProtKB-UniRule"/>
</dbReference>
<dbReference type="GO" id="GO:0042953">
    <property type="term" value="P:lipoprotein transport"/>
    <property type="evidence" value="ECO:0007669"/>
    <property type="project" value="InterPro"/>
</dbReference>
<dbReference type="CDD" id="cd16325">
    <property type="entry name" value="LolA"/>
    <property type="match status" value="1"/>
</dbReference>
<dbReference type="Gene3D" id="2.50.20.10">
    <property type="entry name" value="Lipoprotein localisation LolA/LolB/LppX"/>
    <property type="match status" value="1"/>
</dbReference>
<dbReference type="HAMAP" id="MF_00240">
    <property type="entry name" value="LolA"/>
    <property type="match status" value="1"/>
</dbReference>
<dbReference type="InterPro" id="IPR029046">
    <property type="entry name" value="LolA/LolB/LppX"/>
</dbReference>
<dbReference type="InterPro" id="IPR004564">
    <property type="entry name" value="OM_lipoprot_carrier_LolA-like"/>
</dbReference>
<dbReference type="InterPro" id="IPR018323">
    <property type="entry name" value="OM_lipoprot_carrier_LolA_Pbac"/>
</dbReference>
<dbReference type="NCBIfam" id="TIGR00547">
    <property type="entry name" value="lolA"/>
    <property type="match status" value="1"/>
</dbReference>
<dbReference type="PANTHER" id="PTHR35869">
    <property type="entry name" value="OUTER-MEMBRANE LIPOPROTEIN CARRIER PROTEIN"/>
    <property type="match status" value="1"/>
</dbReference>
<dbReference type="PANTHER" id="PTHR35869:SF1">
    <property type="entry name" value="OUTER-MEMBRANE LIPOPROTEIN CARRIER PROTEIN"/>
    <property type="match status" value="1"/>
</dbReference>
<dbReference type="Pfam" id="PF03548">
    <property type="entry name" value="LolA"/>
    <property type="match status" value="1"/>
</dbReference>
<dbReference type="SUPFAM" id="SSF89392">
    <property type="entry name" value="Prokaryotic lipoproteins and lipoprotein localization factors"/>
    <property type="match status" value="1"/>
</dbReference>
<keyword id="KW-0143">Chaperone</keyword>
<keyword id="KW-0574">Periplasm</keyword>
<keyword id="KW-0653">Protein transport</keyword>
<keyword id="KW-0732">Signal</keyword>
<keyword id="KW-0813">Transport</keyword>
<gene>
    <name evidence="1" type="primary">lolA</name>
    <name type="ordered locus">VV1323</name>
</gene>
<protein>
    <recommendedName>
        <fullName evidence="1">Outer-membrane lipoprotein carrier protein</fullName>
    </recommendedName>
</protein>
<comment type="function">
    <text evidence="1">Participates in the translocation of lipoproteins from the inner membrane to the outer membrane. Only forms a complex with a lipoprotein if the residue after the N-terminal Cys is not an aspartate (The Asp acts as a targeting signal to indicate that the lipoprotein should stay in the inner membrane).</text>
</comment>
<comment type="subunit">
    <text evidence="1">Monomer.</text>
</comment>
<comment type="subcellular location">
    <subcellularLocation>
        <location evidence="1">Periplasm</location>
    </subcellularLocation>
</comment>
<comment type="similarity">
    <text evidence="1">Belongs to the LolA family.</text>
</comment>
<proteinExistence type="inferred from homology"/>
<sequence length="198" mass="22295">MKKWLVVFFLSASALANPQQELNQRLGMNDGFSANFNQTVTSPEGEVVMEGEGSVDIARPSLFRWSTSLPDENLLVSDGKTLWYYSPFIEQVSIYWQEQAVQQTPFVLLTRNQSSDWENYQITQDGNVFTLVPKAADSTQGQFQIDIDAKGIVHGFNVIEQDGQKGIFKFTDMKLGKPAAARFTFNIPEGVEVDDQRN</sequence>
<evidence type="ECO:0000255" key="1">
    <source>
        <dbReference type="HAMAP-Rule" id="MF_00240"/>
    </source>
</evidence>
<name>LOLA_VIBVY</name>